<protein>
    <recommendedName>
        <fullName evidence="1">Polyamine aminopropyltransferase</fullName>
    </recommendedName>
    <alternativeName>
        <fullName evidence="1">Putrescine aminopropyltransferase</fullName>
        <shortName evidence="1">PAPT</shortName>
    </alternativeName>
    <alternativeName>
        <fullName evidence="1">Spermidine synthase</fullName>
        <shortName evidence="1">SPDS</shortName>
        <shortName evidence="1">SPDSY</shortName>
        <ecNumber evidence="1">2.5.1.16</ecNumber>
    </alternativeName>
</protein>
<organism>
    <name type="scientific">Escherichia coli (strain SMS-3-5 / SECEC)</name>
    <dbReference type="NCBI Taxonomy" id="439855"/>
    <lineage>
        <taxon>Bacteria</taxon>
        <taxon>Pseudomonadati</taxon>
        <taxon>Pseudomonadota</taxon>
        <taxon>Gammaproteobacteria</taxon>
        <taxon>Enterobacterales</taxon>
        <taxon>Enterobacteriaceae</taxon>
        <taxon>Escherichia</taxon>
    </lineage>
</organism>
<proteinExistence type="inferred from homology"/>
<reference key="1">
    <citation type="journal article" date="2008" name="J. Bacteriol.">
        <title>Insights into the environmental resistance gene pool from the genome sequence of the multidrug-resistant environmental isolate Escherichia coli SMS-3-5.</title>
        <authorList>
            <person name="Fricke W.F."/>
            <person name="Wright M.S."/>
            <person name="Lindell A.H."/>
            <person name="Harkins D.M."/>
            <person name="Baker-Austin C."/>
            <person name="Ravel J."/>
            <person name="Stepanauskas R."/>
        </authorList>
    </citation>
    <scope>NUCLEOTIDE SEQUENCE [LARGE SCALE GENOMIC DNA]</scope>
    <source>
        <strain>SMS-3-5 / SECEC</strain>
    </source>
</reference>
<dbReference type="EC" id="2.5.1.16" evidence="1"/>
<dbReference type="EMBL" id="CP000970">
    <property type="protein sequence ID" value="ACB19134.1"/>
    <property type="molecule type" value="Genomic_DNA"/>
</dbReference>
<dbReference type="RefSeq" id="WP_000818411.1">
    <property type="nucleotide sequence ID" value="NC_010498.1"/>
</dbReference>
<dbReference type="SMR" id="B1LGS2"/>
<dbReference type="GeneID" id="75202064"/>
<dbReference type="KEGG" id="ecm:EcSMS35_0131"/>
<dbReference type="HOGENOM" id="CLU_048199_0_0_6"/>
<dbReference type="UniPathway" id="UPA00248">
    <property type="reaction ID" value="UER00314"/>
</dbReference>
<dbReference type="Proteomes" id="UP000007011">
    <property type="component" value="Chromosome"/>
</dbReference>
<dbReference type="GO" id="GO:0005829">
    <property type="term" value="C:cytosol"/>
    <property type="evidence" value="ECO:0007669"/>
    <property type="project" value="TreeGrafter"/>
</dbReference>
<dbReference type="GO" id="GO:0004766">
    <property type="term" value="F:spermidine synthase activity"/>
    <property type="evidence" value="ECO:0007669"/>
    <property type="project" value="UniProtKB-UniRule"/>
</dbReference>
<dbReference type="GO" id="GO:0008295">
    <property type="term" value="P:spermidine biosynthetic process"/>
    <property type="evidence" value="ECO:0007669"/>
    <property type="project" value="UniProtKB-UniRule"/>
</dbReference>
<dbReference type="CDD" id="cd02440">
    <property type="entry name" value="AdoMet_MTases"/>
    <property type="match status" value="1"/>
</dbReference>
<dbReference type="FunFam" id="2.30.140.10:FF:000002">
    <property type="entry name" value="Polyamine aminopropyltransferase"/>
    <property type="match status" value="1"/>
</dbReference>
<dbReference type="FunFam" id="3.40.50.150:FF:000026">
    <property type="entry name" value="Polyamine aminopropyltransferase"/>
    <property type="match status" value="1"/>
</dbReference>
<dbReference type="Gene3D" id="2.30.140.10">
    <property type="entry name" value="Spermidine synthase, tetramerisation domain"/>
    <property type="match status" value="1"/>
</dbReference>
<dbReference type="Gene3D" id="3.40.50.150">
    <property type="entry name" value="Vaccinia Virus protein VP39"/>
    <property type="match status" value="1"/>
</dbReference>
<dbReference type="HAMAP" id="MF_00198">
    <property type="entry name" value="Spermidine_synth"/>
    <property type="match status" value="1"/>
</dbReference>
<dbReference type="InterPro" id="IPR030374">
    <property type="entry name" value="PABS"/>
</dbReference>
<dbReference type="InterPro" id="IPR030373">
    <property type="entry name" value="PABS_CS"/>
</dbReference>
<dbReference type="InterPro" id="IPR029063">
    <property type="entry name" value="SAM-dependent_MTases_sf"/>
</dbReference>
<dbReference type="InterPro" id="IPR001045">
    <property type="entry name" value="Spermi_synthase"/>
</dbReference>
<dbReference type="InterPro" id="IPR035246">
    <property type="entry name" value="Spermidine_synt_N"/>
</dbReference>
<dbReference type="InterPro" id="IPR037163">
    <property type="entry name" value="Spermidine_synt_N_sf"/>
</dbReference>
<dbReference type="NCBIfam" id="NF037959">
    <property type="entry name" value="MFS_SpdSyn"/>
    <property type="match status" value="1"/>
</dbReference>
<dbReference type="NCBIfam" id="NF002010">
    <property type="entry name" value="PRK00811.1"/>
    <property type="match status" value="1"/>
</dbReference>
<dbReference type="NCBIfam" id="TIGR00417">
    <property type="entry name" value="speE"/>
    <property type="match status" value="1"/>
</dbReference>
<dbReference type="PANTHER" id="PTHR11558:SF11">
    <property type="entry name" value="SPERMIDINE SYNTHASE"/>
    <property type="match status" value="1"/>
</dbReference>
<dbReference type="PANTHER" id="PTHR11558">
    <property type="entry name" value="SPERMIDINE/SPERMINE SYNTHASE"/>
    <property type="match status" value="1"/>
</dbReference>
<dbReference type="Pfam" id="PF17284">
    <property type="entry name" value="Spermine_synt_N"/>
    <property type="match status" value="1"/>
</dbReference>
<dbReference type="Pfam" id="PF01564">
    <property type="entry name" value="Spermine_synth"/>
    <property type="match status" value="1"/>
</dbReference>
<dbReference type="SUPFAM" id="SSF53335">
    <property type="entry name" value="S-adenosyl-L-methionine-dependent methyltransferases"/>
    <property type="match status" value="1"/>
</dbReference>
<dbReference type="PROSITE" id="PS01330">
    <property type="entry name" value="PABS_1"/>
    <property type="match status" value="1"/>
</dbReference>
<dbReference type="PROSITE" id="PS51006">
    <property type="entry name" value="PABS_2"/>
    <property type="match status" value="1"/>
</dbReference>
<accession>B1LGS2</accession>
<gene>
    <name evidence="1" type="primary">speE</name>
    <name type="ordered locus">EcSMS35_0131</name>
</gene>
<feature type="chain" id="PRO_1000197469" description="Polyamine aminopropyltransferase">
    <location>
        <begin position="1"/>
        <end position="288"/>
    </location>
</feature>
<feature type="domain" description="PABS" evidence="1">
    <location>
        <begin position="9"/>
        <end position="238"/>
    </location>
</feature>
<feature type="active site" description="Proton acceptor" evidence="1">
    <location>
        <position position="158"/>
    </location>
</feature>
<feature type="binding site" evidence="1">
    <location>
        <position position="33"/>
    </location>
    <ligand>
        <name>S-methyl-5'-thioadenosine</name>
        <dbReference type="ChEBI" id="CHEBI:17509"/>
    </ligand>
</feature>
<feature type="binding site" evidence="1">
    <location>
        <position position="64"/>
    </location>
    <ligand>
        <name>spermidine</name>
        <dbReference type="ChEBI" id="CHEBI:57834"/>
    </ligand>
</feature>
<feature type="binding site" evidence="1">
    <location>
        <position position="88"/>
    </location>
    <ligand>
        <name>spermidine</name>
        <dbReference type="ChEBI" id="CHEBI:57834"/>
    </ligand>
</feature>
<feature type="binding site" evidence="1">
    <location>
        <position position="108"/>
    </location>
    <ligand>
        <name>S-methyl-5'-thioadenosine</name>
        <dbReference type="ChEBI" id="CHEBI:17509"/>
    </ligand>
</feature>
<feature type="binding site" evidence="1">
    <location>
        <begin position="140"/>
        <end position="141"/>
    </location>
    <ligand>
        <name>S-methyl-5'-thioadenosine</name>
        <dbReference type="ChEBI" id="CHEBI:17509"/>
    </ligand>
</feature>
<feature type="binding site" evidence="1">
    <location>
        <begin position="158"/>
        <end position="161"/>
    </location>
    <ligand>
        <name>spermidine</name>
        <dbReference type="ChEBI" id="CHEBI:57834"/>
    </ligand>
</feature>
<feature type="binding site" evidence="1">
    <location>
        <position position="165"/>
    </location>
    <ligand>
        <name>S-methyl-5'-thioadenosine</name>
        <dbReference type="ChEBI" id="CHEBI:17509"/>
    </ligand>
</feature>
<sequence>MAEKKQWHETLHDQFGQYFAVDNVLYHEKTDHQDLIIFENAAFGRVMALDGVVQTTERDEFIYHEMMTHVPLLAHGHAKHVLIIGGGDGAMLREVTRHKNVESITMVEIDAGVVSFCRQYLPNHNAGSYDDPRFKLVIDDGVNFVNQTSQTFDVIISDCTDPIGPGESLFTSAFYEGCKRCLNPGGIFVAQNGVCFLQQEEAIDSHRKLSHYFSDVGFYQAAIPTYYGGIMTFAWATDNDALRHLSTEIIQARFLASGLKCRYYNPAIHTAAFALPQYLQDALASQPS</sequence>
<comment type="function">
    <text evidence="1">Catalyzes the irreversible transfer of a propylamine group from the amino donor S-adenosylmethioninamine (decarboxy-AdoMet) to putrescine (1,4-diaminobutane) to yield spermidine.</text>
</comment>
<comment type="catalytic activity">
    <reaction evidence="1">
        <text>S-adenosyl 3-(methylsulfanyl)propylamine + putrescine = S-methyl-5'-thioadenosine + spermidine + H(+)</text>
        <dbReference type="Rhea" id="RHEA:12721"/>
        <dbReference type="ChEBI" id="CHEBI:15378"/>
        <dbReference type="ChEBI" id="CHEBI:17509"/>
        <dbReference type="ChEBI" id="CHEBI:57443"/>
        <dbReference type="ChEBI" id="CHEBI:57834"/>
        <dbReference type="ChEBI" id="CHEBI:326268"/>
        <dbReference type="EC" id="2.5.1.16"/>
    </reaction>
</comment>
<comment type="pathway">
    <text evidence="1">Amine and polyamine biosynthesis; spermidine biosynthesis; spermidine from putrescine: step 1/1.</text>
</comment>
<comment type="subunit">
    <text evidence="1">Homodimer or homotetramer.</text>
</comment>
<comment type="subcellular location">
    <subcellularLocation>
        <location evidence="1">Cytoplasm</location>
    </subcellularLocation>
</comment>
<comment type="similarity">
    <text evidence="1">Belongs to the spermidine/spermine synthase family.</text>
</comment>
<name>SPEE_ECOSM</name>
<evidence type="ECO:0000255" key="1">
    <source>
        <dbReference type="HAMAP-Rule" id="MF_00198"/>
    </source>
</evidence>
<keyword id="KW-0963">Cytoplasm</keyword>
<keyword id="KW-0620">Polyamine biosynthesis</keyword>
<keyword id="KW-0745">Spermidine biosynthesis</keyword>
<keyword id="KW-0808">Transferase</keyword>